<evidence type="ECO:0000255" key="1">
    <source>
        <dbReference type="HAMAP-Rule" id="MF_00587"/>
    </source>
</evidence>
<proteinExistence type="inferred from homology"/>
<accession>Q9HNR6</accession>
<keyword id="KW-0963">Cytoplasm</keyword>
<keyword id="KW-0489">Methyltransferase</keyword>
<keyword id="KW-1185">Reference proteome</keyword>
<keyword id="KW-0949">S-adenosyl-L-methionine</keyword>
<keyword id="KW-0808">Transferase</keyword>
<keyword id="KW-0819">tRNA processing</keyword>
<reference key="1">
    <citation type="journal article" date="2000" name="Proc. Natl. Acad. Sci. U.S.A.">
        <title>Genome sequence of Halobacterium species NRC-1.</title>
        <authorList>
            <person name="Ng W.V."/>
            <person name="Kennedy S.P."/>
            <person name="Mahairas G.G."/>
            <person name="Berquist B."/>
            <person name="Pan M."/>
            <person name="Shukla H.D."/>
            <person name="Lasky S.R."/>
            <person name="Baliga N.S."/>
            <person name="Thorsson V."/>
            <person name="Sbrogna J."/>
            <person name="Swartzell S."/>
            <person name="Weir D."/>
            <person name="Hall J."/>
            <person name="Dahl T.A."/>
            <person name="Welti R."/>
            <person name="Goo Y.A."/>
            <person name="Leithauser B."/>
            <person name="Keller K."/>
            <person name="Cruz R."/>
            <person name="Danson M.J."/>
            <person name="Hough D.W."/>
            <person name="Maddocks D.G."/>
            <person name="Jablonski P.E."/>
            <person name="Krebs M.P."/>
            <person name="Angevine C.M."/>
            <person name="Dale H."/>
            <person name="Isenbarger T.A."/>
            <person name="Peck R.F."/>
            <person name="Pohlschroder M."/>
            <person name="Spudich J.L."/>
            <person name="Jung K.-H."/>
            <person name="Alam M."/>
            <person name="Freitas T."/>
            <person name="Hou S."/>
            <person name="Daniels C.J."/>
            <person name="Dennis P.P."/>
            <person name="Omer A.D."/>
            <person name="Ebhardt H."/>
            <person name="Lowe T.M."/>
            <person name="Liang P."/>
            <person name="Riley M."/>
            <person name="Hood L."/>
            <person name="DasSarma S."/>
        </authorList>
    </citation>
    <scope>NUCLEOTIDE SEQUENCE [LARGE SCALE GENOMIC DNA]</scope>
    <source>
        <strain>ATCC 700922 / JCM 11081 / NRC-1</strain>
    </source>
</reference>
<sequence length="196" mass="20722">MRQFVVLGHDAPTTPDFPLDDLPGAAGRLDVLCRCVSAALFVSHGIRDDVEVFLVLGDEVTVRIDAGAVQYMHPDERNVAGLLKQALDAKTEAIGHQEASSSPGIHVSKRGFEAVLDAVSGPVVALHEDGDALAAVDPLADPVFVLSDHRDFTAAEASLLADASDHRVRVGPTVLHADHAITVAHNHLDTAGFDAY</sequence>
<name>TRMY_HALSA</name>
<comment type="function">
    <text evidence="1">Specifically catalyzes the N1-methylation of pseudouridine at position 54 (Psi54) in tRNAs.</text>
</comment>
<comment type="catalytic activity">
    <reaction evidence="1">
        <text>pseudouridine(54) in tRNA + S-adenosyl-L-methionine = N(1)-methylpseudouridine(54) in tRNA + S-adenosyl-L-homocysteine + H(+)</text>
        <dbReference type="Rhea" id="RHEA:55292"/>
        <dbReference type="Rhea" id="RHEA-COMP:14140"/>
        <dbReference type="Rhea" id="RHEA-COMP:14141"/>
        <dbReference type="ChEBI" id="CHEBI:15378"/>
        <dbReference type="ChEBI" id="CHEBI:57856"/>
        <dbReference type="ChEBI" id="CHEBI:59789"/>
        <dbReference type="ChEBI" id="CHEBI:65314"/>
        <dbReference type="ChEBI" id="CHEBI:74890"/>
        <dbReference type="EC" id="2.1.1.257"/>
    </reaction>
</comment>
<comment type="subunit">
    <text evidence="1">Homodimer.</text>
</comment>
<comment type="subcellular location">
    <subcellularLocation>
        <location evidence="1">Cytoplasm</location>
    </subcellularLocation>
</comment>
<comment type="similarity">
    <text evidence="1">Belongs to the methyltransferase superfamily. TrmY family.</text>
</comment>
<dbReference type="EC" id="2.1.1.257" evidence="1"/>
<dbReference type="EMBL" id="AE004437">
    <property type="protein sequence ID" value="AAG20154.1"/>
    <property type="molecule type" value="Genomic_DNA"/>
</dbReference>
<dbReference type="PIR" id="F84348">
    <property type="entry name" value="F84348"/>
</dbReference>
<dbReference type="RefSeq" id="WP_010903455.1">
    <property type="nucleotide sequence ID" value="NC_002607.1"/>
</dbReference>
<dbReference type="SMR" id="Q9HNR6"/>
<dbReference type="STRING" id="64091.VNG_1980C"/>
<dbReference type="PaxDb" id="64091-VNG_1980C"/>
<dbReference type="GeneID" id="89350169"/>
<dbReference type="KEGG" id="hal:VNG_1980C"/>
<dbReference type="PATRIC" id="fig|64091.14.peg.1510"/>
<dbReference type="HOGENOM" id="CLU_107018_0_0_2"/>
<dbReference type="InParanoid" id="Q9HNR6"/>
<dbReference type="OrthoDB" id="27492at2157"/>
<dbReference type="PhylomeDB" id="Q9HNR6"/>
<dbReference type="BRENDA" id="2.1.1.257">
    <property type="organism ID" value="2559"/>
</dbReference>
<dbReference type="Proteomes" id="UP000000554">
    <property type="component" value="Chromosome"/>
</dbReference>
<dbReference type="GO" id="GO:0005737">
    <property type="term" value="C:cytoplasm"/>
    <property type="evidence" value="ECO:0007669"/>
    <property type="project" value="UniProtKB-SubCell"/>
</dbReference>
<dbReference type="GO" id="GO:0008757">
    <property type="term" value="F:S-adenosylmethionine-dependent methyltransferase activity"/>
    <property type="evidence" value="ECO:0000318"/>
    <property type="project" value="GO_Central"/>
</dbReference>
<dbReference type="GO" id="GO:0008175">
    <property type="term" value="F:tRNA methyltransferase activity"/>
    <property type="evidence" value="ECO:0000318"/>
    <property type="project" value="GO_Central"/>
</dbReference>
<dbReference type="GO" id="GO:0030488">
    <property type="term" value="P:tRNA methylation"/>
    <property type="evidence" value="ECO:0000318"/>
    <property type="project" value="GO_Central"/>
</dbReference>
<dbReference type="CDD" id="cd18087">
    <property type="entry name" value="TrmY-like"/>
    <property type="match status" value="1"/>
</dbReference>
<dbReference type="Gene3D" id="3.40.1280.10">
    <property type="match status" value="1"/>
</dbReference>
<dbReference type="HAMAP" id="MF_00587">
    <property type="entry name" value="tRNA_methyltr_TrmY"/>
    <property type="match status" value="1"/>
</dbReference>
<dbReference type="InterPro" id="IPR029028">
    <property type="entry name" value="Alpha/beta_knot_MTases"/>
</dbReference>
<dbReference type="InterPro" id="IPR007158">
    <property type="entry name" value="TrmY"/>
</dbReference>
<dbReference type="InterPro" id="IPR029026">
    <property type="entry name" value="tRNA_m1G_MTases_N"/>
</dbReference>
<dbReference type="NCBIfam" id="NF002560">
    <property type="entry name" value="PRK02135.1"/>
    <property type="match status" value="1"/>
</dbReference>
<dbReference type="PANTHER" id="PTHR40703">
    <property type="entry name" value="TRNA (PSEUDOURIDINE(54)-N(1))-METHYLTRANSFERASE"/>
    <property type="match status" value="1"/>
</dbReference>
<dbReference type="PANTHER" id="PTHR40703:SF1">
    <property type="entry name" value="TRNA (PSEUDOURIDINE(54)-N(1))-METHYLTRANSFERASE"/>
    <property type="match status" value="1"/>
</dbReference>
<dbReference type="Pfam" id="PF04013">
    <property type="entry name" value="Methyltrn_RNA_2"/>
    <property type="match status" value="1"/>
</dbReference>
<dbReference type="SUPFAM" id="SSF75217">
    <property type="entry name" value="alpha/beta knot"/>
    <property type="match status" value="1"/>
</dbReference>
<gene>
    <name evidence="1" type="primary">trmY</name>
    <name type="ordered locus">VNG_1980C</name>
</gene>
<protein>
    <recommendedName>
        <fullName evidence="1">tRNA (pseudouridine(54)-N(1))-methyltransferase</fullName>
        <ecNumber evidence="1">2.1.1.257</ecNumber>
    </recommendedName>
</protein>
<feature type="chain" id="PRO_0000157946" description="tRNA (pseudouridine(54)-N(1))-methyltransferase">
    <location>
        <begin position="1"/>
        <end position="196"/>
    </location>
</feature>
<feature type="binding site" evidence="1">
    <location>
        <position position="126"/>
    </location>
    <ligand>
        <name>S-adenosyl-L-methionine</name>
        <dbReference type="ChEBI" id="CHEBI:59789"/>
    </ligand>
</feature>
<organism>
    <name type="scientific">Halobacterium salinarum (strain ATCC 700922 / JCM 11081 / NRC-1)</name>
    <name type="common">Halobacterium halobium</name>
    <dbReference type="NCBI Taxonomy" id="64091"/>
    <lineage>
        <taxon>Archaea</taxon>
        <taxon>Methanobacteriati</taxon>
        <taxon>Methanobacteriota</taxon>
        <taxon>Stenosarchaea group</taxon>
        <taxon>Halobacteria</taxon>
        <taxon>Halobacteriales</taxon>
        <taxon>Halobacteriaceae</taxon>
        <taxon>Halobacterium</taxon>
        <taxon>Halobacterium salinarum NRC-34001</taxon>
    </lineage>
</organism>